<sequence>MEKRILGLDPGLATLGFGVITCTQIANKVPETTVNMLDFGVIKTSADVEMGLRLCTLFDDLHTVMEEFQPDLVAIEKLFFYRMSSTILVAQARGVLILVLGQRRLPYVEFTPAQIKQALTGYGNADKLDVQEAVARELDLDEIPKPDDAADALAVALTASYQL</sequence>
<comment type="function">
    <text evidence="1">The RuvA-RuvB-RuvC complex processes Holliday junction (HJ) DNA during genetic recombination and DNA repair. Endonuclease that resolves HJ intermediates. Cleaves cruciform DNA by making single-stranded nicks across the HJ at symmetrical positions within the homologous arms, yielding a 5'-phosphate and a 3'-hydroxyl group; requires a central core of homology in the junction. The consensus cleavage sequence is 5'-(A/T)TT(C/G)-3'. Cleavage occurs on the 3'-side of the TT dinucleotide at the point of strand exchange. HJ branch migration catalyzed by RuvA-RuvB allows RuvC to scan DNA until it finds its consensus sequence, where it cleaves and resolves the cruciform DNA.</text>
</comment>
<comment type="catalytic activity">
    <reaction evidence="1">
        <text>Endonucleolytic cleavage at a junction such as a reciprocal single-stranded crossover between two homologous DNA duplexes (Holliday junction).</text>
        <dbReference type="EC" id="3.1.21.10"/>
    </reaction>
</comment>
<comment type="cofactor">
    <cofactor evidence="1">
        <name>Mg(2+)</name>
        <dbReference type="ChEBI" id="CHEBI:18420"/>
    </cofactor>
    <text evidence="1">Binds 2 Mg(2+) ion per subunit.</text>
</comment>
<comment type="subunit">
    <text evidence="1">Homodimer which binds Holliday junction (HJ) DNA. The HJ becomes 2-fold symmetrical on binding to RuvC with unstacked arms; it has a different conformation from HJ DNA in complex with RuvA. In the full resolvosome a probable DNA-RuvA(4)-RuvB(12)-RuvC(2) complex forms which resolves the HJ.</text>
</comment>
<comment type="subcellular location">
    <subcellularLocation>
        <location evidence="1">Cytoplasm</location>
    </subcellularLocation>
</comment>
<comment type="similarity">
    <text evidence="1">Belongs to the RuvC family.</text>
</comment>
<name>RUVC_NOSP7</name>
<organism>
    <name type="scientific">Nostoc punctiforme (strain ATCC 29133 / PCC 73102)</name>
    <dbReference type="NCBI Taxonomy" id="63737"/>
    <lineage>
        <taxon>Bacteria</taxon>
        <taxon>Bacillati</taxon>
        <taxon>Cyanobacteriota</taxon>
        <taxon>Cyanophyceae</taxon>
        <taxon>Nostocales</taxon>
        <taxon>Nostocaceae</taxon>
        <taxon>Nostoc</taxon>
    </lineage>
</organism>
<proteinExistence type="inferred from homology"/>
<reference key="1">
    <citation type="journal article" date="2013" name="Plant Physiol.">
        <title>A Nostoc punctiforme Sugar Transporter Necessary to Establish a Cyanobacterium-Plant Symbiosis.</title>
        <authorList>
            <person name="Ekman M."/>
            <person name="Picossi S."/>
            <person name="Campbell E.L."/>
            <person name="Meeks J.C."/>
            <person name="Flores E."/>
        </authorList>
    </citation>
    <scope>NUCLEOTIDE SEQUENCE [LARGE SCALE GENOMIC DNA]</scope>
    <source>
        <strain>ATCC 29133 / PCC 73102</strain>
    </source>
</reference>
<gene>
    <name evidence="1" type="primary">ruvC</name>
    <name type="ordered locus">Npun_R5350</name>
</gene>
<feature type="chain" id="PRO_1000090541" description="Crossover junction endodeoxyribonuclease RuvC">
    <location>
        <begin position="1"/>
        <end position="163"/>
    </location>
</feature>
<feature type="active site" evidence="1">
    <location>
        <position position="9"/>
    </location>
</feature>
<feature type="active site" evidence="1">
    <location>
        <position position="76"/>
    </location>
</feature>
<feature type="active site" evidence="1">
    <location>
        <position position="148"/>
    </location>
</feature>
<feature type="binding site" evidence="1">
    <location>
        <position position="9"/>
    </location>
    <ligand>
        <name>Mg(2+)</name>
        <dbReference type="ChEBI" id="CHEBI:18420"/>
        <label>1</label>
    </ligand>
</feature>
<feature type="binding site" evidence="1">
    <location>
        <position position="76"/>
    </location>
    <ligand>
        <name>Mg(2+)</name>
        <dbReference type="ChEBI" id="CHEBI:18420"/>
        <label>2</label>
    </ligand>
</feature>
<feature type="binding site" evidence="1">
    <location>
        <position position="148"/>
    </location>
    <ligand>
        <name>Mg(2+)</name>
        <dbReference type="ChEBI" id="CHEBI:18420"/>
        <label>1</label>
    </ligand>
</feature>
<keyword id="KW-0963">Cytoplasm</keyword>
<keyword id="KW-0227">DNA damage</keyword>
<keyword id="KW-0233">DNA recombination</keyword>
<keyword id="KW-0234">DNA repair</keyword>
<keyword id="KW-0238">DNA-binding</keyword>
<keyword id="KW-0255">Endonuclease</keyword>
<keyword id="KW-0378">Hydrolase</keyword>
<keyword id="KW-0460">Magnesium</keyword>
<keyword id="KW-0479">Metal-binding</keyword>
<keyword id="KW-0540">Nuclease</keyword>
<keyword id="KW-1185">Reference proteome</keyword>
<accession>B2J4H5</accession>
<dbReference type="EC" id="3.1.21.10" evidence="1"/>
<dbReference type="EMBL" id="CP001037">
    <property type="protein sequence ID" value="ACC83665.1"/>
    <property type="molecule type" value="Genomic_DNA"/>
</dbReference>
<dbReference type="RefSeq" id="WP_012411616.1">
    <property type="nucleotide sequence ID" value="NC_010628.1"/>
</dbReference>
<dbReference type="SMR" id="B2J4H5"/>
<dbReference type="STRING" id="63737.Npun_R5350"/>
<dbReference type="EnsemblBacteria" id="ACC83665">
    <property type="protein sequence ID" value="ACC83665"/>
    <property type="gene ID" value="Npun_R5350"/>
</dbReference>
<dbReference type="KEGG" id="npu:Npun_R5350"/>
<dbReference type="eggNOG" id="COG0817">
    <property type="taxonomic scope" value="Bacteria"/>
</dbReference>
<dbReference type="HOGENOM" id="CLU_091257_3_1_3"/>
<dbReference type="OrthoDB" id="9805499at2"/>
<dbReference type="PhylomeDB" id="B2J4H5"/>
<dbReference type="Proteomes" id="UP000001191">
    <property type="component" value="Chromosome"/>
</dbReference>
<dbReference type="GO" id="GO:0005737">
    <property type="term" value="C:cytoplasm"/>
    <property type="evidence" value="ECO:0007669"/>
    <property type="project" value="UniProtKB-SubCell"/>
</dbReference>
<dbReference type="GO" id="GO:0048476">
    <property type="term" value="C:Holliday junction resolvase complex"/>
    <property type="evidence" value="ECO:0007669"/>
    <property type="project" value="UniProtKB-UniRule"/>
</dbReference>
<dbReference type="GO" id="GO:0008821">
    <property type="term" value="F:crossover junction DNA endonuclease activity"/>
    <property type="evidence" value="ECO:0007669"/>
    <property type="project" value="UniProtKB-UniRule"/>
</dbReference>
<dbReference type="GO" id="GO:0003677">
    <property type="term" value="F:DNA binding"/>
    <property type="evidence" value="ECO:0007669"/>
    <property type="project" value="UniProtKB-KW"/>
</dbReference>
<dbReference type="GO" id="GO:0000287">
    <property type="term" value="F:magnesium ion binding"/>
    <property type="evidence" value="ECO:0007669"/>
    <property type="project" value="UniProtKB-UniRule"/>
</dbReference>
<dbReference type="GO" id="GO:0006310">
    <property type="term" value="P:DNA recombination"/>
    <property type="evidence" value="ECO:0007669"/>
    <property type="project" value="UniProtKB-UniRule"/>
</dbReference>
<dbReference type="GO" id="GO:0006281">
    <property type="term" value="P:DNA repair"/>
    <property type="evidence" value="ECO:0007669"/>
    <property type="project" value="UniProtKB-UniRule"/>
</dbReference>
<dbReference type="CDD" id="cd16962">
    <property type="entry name" value="RuvC"/>
    <property type="match status" value="1"/>
</dbReference>
<dbReference type="FunFam" id="3.30.420.10:FF:000002">
    <property type="entry name" value="Crossover junction endodeoxyribonuclease RuvC"/>
    <property type="match status" value="1"/>
</dbReference>
<dbReference type="Gene3D" id="3.30.420.10">
    <property type="entry name" value="Ribonuclease H-like superfamily/Ribonuclease H"/>
    <property type="match status" value="1"/>
</dbReference>
<dbReference type="HAMAP" id="MF_00034">
    <property type="entry name" value="RuvC"/>
    <property type="match status" value="1"/>
</dbReference>
<dbReference type="InterPro" id="IPR012337">
    <property type="entry name" value="RNaseH-like_sf"/>
</dbReference>
<dbReference type="InterPro" id="IPR036397">
    <property type="entry name" value="RNaseH_sf"/>
</dbReference>
<dbReference type="InterPro" id="IPR002176">
    <property type="entry name" value="X-over_junc_endoDNase_RuvC"/>
</dbReference>
<dbReference type="NCBIfam" id="NF000711">
    <property type="entry name" value="PRK00039.2-1"/>
    <property type="match status" value="1"/>
</dbReference>
<dbReference type="NCBIfam" id="TIGR00228">
    <property type="entry name" value="ruvC"/>
    <property type="match status" value="1"/>
</dbReference>
<dbReference type="PANTHER" id="PTHR30194">
    <property type="entry name" value="CROSSOVER JUNCTION ENDODEOXYRIBONUCLEASE RUVC"/>
    <property type="match status" value="1"/>
</dbReference>
<dbReference type="PANTHER" id="PTHR30194:SF3">
    <property type="entry name" value="CROSSOVER JUNCTION ENDODEOXYRIBONUCLEASE RUVC"/>
    <property type="match status" value="1"/>
</dbReference>
<dbReference type="Pfam" id="PF02075">
    <property type="entry name" value="RuvC"/>
    <property type="match status" value="1"/>
</dbReference>
<dbReference type="PRINTS" id="PR00696">
    <property type="entry name" value="RSOLVASERUVC"/>
</dbReference>
<dbReference type="SUPFAM" id="SSF53098">
    <property type="entry name" value="Ribonuclease H-like"/>
    <property type="match status" value="1"/>
</dbReference>
<protein>
    <recommendedName>
        <fullName evidence="1">Crossover junction endodeoxyribonuclease RuvC</fullName>
        <ecNumber evidence="1">3.1.21.10</ecNumber>
    </recommendedName>
    <alternativeName>
        <fullName evidence="1">Holliday junction nuclease RuvC</fullName>
    </alternativeName>
    <alternativeName>
        <fullName evidence="1">Holliday junction resolvase RuvC</fullName>
    </alternativeName>
</protein>
<evidence type="ECO:0000255" key="1">
    <source>
        <dbReference type="HAMAP-Rule" id="MF_00034"/>
    </source>
</evidence>